<organism>
    <name type="scientific">Haloferax volcanii (strain ATCC 29605 / DSM 3757 / JCM 8879 / NBRC 14742 / NCIMB 2012 / VKM B-1768 / DS2)</name>
    <name type="common">Halobacterium volcanii</name>
    <dbReference type="NCBI Taxonomy" id="309800"/>
    <lineage>
        <taxon>Archaea</taxon>
        <taxon>Methanobacteriati</taxon>
        <taxon>Methanobacteriota</taxon>
        <taxon>Stenosarchaea group</taxon>
        <taxon>Halobacteria</taxon>
        <taxon>Halobacteriales</taxon>
        <taxon>Haloferacaceae</taxon>
        <taxon>Haloferax</taxon>
    </lineage>
</organism>
<comment type="function">
    <text evidence="2 4">Part of the ABC transporter complex XacGHIJK involved in the uptake of xylose and arabinose (PubMed:31089701). Responsible for energy coupling to the transport system (Probable).</text>
</comment>
<comment type="catalytic activity">
    <reaction evidence="2">
        <text>D-xylose(out) + ATP + H2O = D-xylose(in) + ADP + phosphate + H(+)</text>
        <dbReference type="Rhea" id="RHEA:29899"/>
        <dbReference type="ChEBI" id="CHEBI:15377"/>
        <dbReference type="ChEBI" id="CHEBI:15378"/>
        <dbReference type="ChEBI" id="CHEBI:30616"/>
        <dbReference type="ChEBI" id="CHEBI:43474"/>
        <dbReference type="ChEBI" id="CHEBI:53455"/>
        <dbReference type="ChEBI" id="CHEBI:456216"/>
        <dbReference type="EC" id="7.5.2.13"/>
    </reaction>
    <physiologicalReaction direction="left-to-right" evidence="2">
        <dbReference type="Rhea" id="RHEA:29900"/>
    </physiologicalReaction>
</comment>
<comment type="catalytic activity">
    <reaction evidence="2">
        <text>L-arabinose(out) + ATP + H2O = L-arabinose(in) + ADP + phosphate + H(+)</text>
        <dbReference type="Rhea" id="RHEA:30007"/>
        <dbReference type="ChEBI" id="CHEBI:15377"/>
        <dbReference type="ChEBI" id="CHEBI:15378"/>
        <dbReference type="ChEBI" id="CHEBI:17535"/>
        <dbReference type="ChEBI" id="CHEBI:30616"/>
        <dbReference type="ChEBI" id="CHEBI:43474"/>
        <dbReference type="ChEBI" id="CHEBI:456216"/>
        <dbReference type="EC" id="7.5.2.13"/>
    </reaction>
    <physiologicalReaction direction="left-to-right" evidence="2">
        <dbReference type="Rhea" id="RHEA:30008"/>
    </physiologicalReaction>
</comment>
<comment type="subunit">
    <text evidence="5">The complex is composed of two ATP-binding proteins (XacJ and XacK), two transmembrane proteins (XacH and XacI) and a solute-binding protein (XacG).</text>
</comment>
<comment type="subcellular location">
    <subcellularLocation>
        <location evidence="4">Cell membrane</location>
        <topology evidence="4">Peripheral membrane protein</topology>
    </subcellularLocation>
</comment>
<comment type="induction">
    <text evidence="2">Transcriptionally up-regulated by both L-arabinose and D-xylose via the pentose-specific regulator XacR.</text>
</comment>
<comment type="similarity">
    <text evidence="4">Belongs to the ABC transporter superfamily. Carbohydrate uptake transporter-1 (CUT1) (TC 3.A.1.1) family.</text>
</comment>
<dbReference type="EC" id="7.5.2.13" evidence="2"/>
<dbReference type="EMBL" id="CP001953">
    <property type="protein sequence ID" value="ADE01308.1"/>
    <property type="molecule type" value="Genomic_DNA"/>
</dbReference>
<dbReference type="RefSeq" id="WP_004041118.1">
    <property type="nucleotide sequence ID" value="NC_013964.1"/>
</dbReference>
<dbReference type="SMR" id="D4GP38"/>
<dbReference type="TCDB" id="3.A.1.1.56">
    <property type="family name" value="the atp-binding cassette (abc) superfamily"/>
</dbReference>
<dbReference type="PaxDb" id="309800-C498_01575"/>
<dbReference type="EnsemblBacteria" id="ADE01308">
    <property type="protein sequence ID" value="ADE01308"/>
    <property type="gene ID" value="HVO_B0037"/>
</dbReference>
<dbReference type="GeneID" id="8919354"/>
<dbReference type="KEGG" id="hvo:HVO_B0037"/>
<dbReference type="PATRIC" id="fig|309800.29.peg.300"/>
<dbReference type="eggNOG" id="arCOG00177">
    <property type="taxonomic scope" value="Archaea"/>
</dbReference>
<dbReference type="HOGENOM" id="CLU_000604_1_1_2"/>
<dbReference type="OrthoDB" id="18368at2157"/>
<dbReference type="Proteomes" id="UP000008243">
    <property type="component" value="Plasmid pHV3"/>
</dbReference>
<dbReference type="GO" id="GO:0055052">
    <property type="term" value="C:ATP-binding cassette (ABC) transporter complex, substrate-binding subunit-containing"/>
    <property type="evidence" value="ECO:0007669"/>
    <property type="project" value="TreeGrafter"/>
</dbReference>
<dbReference type="GO" id="GO:0015614">
    <property type="term" value="F:ABC-type D-xylose transporter activity"/>
    <property type="evidence" value="ECO:0007669"/>
    <property type="project" value="RHEA"/>
</dbReference>
<dbReference type="GO" id="GO:0015612">
    <property type="term" value="F:ABC-type L-arabinose transporter activity"/>
    <property type="evidence" value="ECO:0007669"/>
    <property type="project" value="RHEA"/>
</dbReference>
<dbReference type="GO" id="GO:0005524">
    <property type="term" value="F:ATP binding"/>
    <property type="evidence" value="ECO:0007669"/>
    <property type="project" value="UniProtKB-KW"/>
</dbReference>
<dbReference type="GO" id="GO:0016887">
    <property type="term" value="F:ATP hydrolysis activity"/>
    <property type="evidence" value="ECO:0007669"/>
    <property type="project" value="InterPro"/>
</dbReference>
<dbReference type="CDD" id="cd03301">
    <property type="entry name" value="ABC_MalK_N"/>
    <property type="match status" value="1"/>
</dbReference>
<dbReference type="FunFam" id="3.40.50.300:FF:000042">
    <property type="entry name" value="Maltose/maltodextrin ABC transporter, ATP-binding protein"/>
    <property type="match status" value="1"/>
</dbReference>
<dbReference type="Gene3D" id="2.40.50.100">
    <property type="match status" value="1"/>
</dbReference>
<dbReference type="Gene3D" id="2.40.50.140">
    <property type="entry name" value="Nucleic acid-binding proteins"/>
    <property type="match status" value="1"/>
</dbReference>
<dbReference type="Gene3D" id="3.40.50.300">
    <property type="entry name" value="P-loop containing nucleotide triphosphate hydrolases"/>
    <property type="match status" value="1"/>
</dbReference>
<dbReference type="InterPro" id="IPR003593">
    <property type="entry name" value="AAA+_ATPase"/>
</dbReference>
<dbReference type="InterPro" id="IPR003439">
    <property type="entry name" value="ABC_transporter-like_ATP-bd"/>
</dbReference>
<dbReference type="InterPro" id="IPR017871">
    <property type="entry name" value="ABC_transporter-like_CS"/>
</dbReference>
<dbReference type="InterPro" id="IPR015855">
    <property type="entry name" value="ABC_transpr_MalK-like"/>
</dbReference>
<dbReference type="InterPro" id="IPR047641">
    <property type="entry name" value="ABC_transpr_MalK/UgpC-like"/>
</dbReference>
<dbReference type="InterPro" id="IPR008995">
    <property type="entry name" value="Mo/tungstate-bd_C_term_dom"/>
</dbReference>
<dbReference type="InterPro" id="IPR012340">
    <property type="entry name" value="NA-bd_OB-fold"/>
</dbReference>
<dbReference type="InterPro" id="IPR027417">
    <property type="entry name" value="P-loop_NTPase"/>
</dbReference>
<dbReference type="InterPro" id="IPR013611">
    <property type="entry name" value="Transp-assoc_OB_typ2"/>
</dbReference>
<dbReference type="PANTHER" id="PTHR43875">
    <property type="entry name" value="MALTODEXTRIN IMPORT ATP-BINDING PROTEIN MSMX"/>
    <property type="match status" value="1"/>
</dbReference>
<dbReference type="PANTHER" id="PTHR43875:SF15">
    <property type="entry name" value="TREHALOSE IMPORT ATP-BINDING PROTEIN SUGC"/>
    <property type="match status" value="1"/>
</dbReference>
<dbReference type="Pfam" id="PF00005">
    <property type="entry name" value="ABC_tran"/>
    <property type="match status" value="1"/>
</dbReference>
<dbReference type="Pfam" id="PF08402">
    <property type="entry name" value="TOBE_2"/>
    <property type="match status" value="1"/>
</dbReference>
<dbReference type="SMART" id="SM00382">
    <property type="entry name" value="AAA"/>
    <property type="match status" value="1"/>
</dbReference>
<dbReference type="SUPFAM" id="SSF50331">
    <property type="entry name" value="MOP-like"/>
    <property type="match status" value="1"/>
</dbReference>
<dbReference type="SUPFAM" id="SSF52540">
    <property type="entry name" value="P-loop containing nucleoside triphosphate hydrolases"/>
    <property type="match status" value="1"/>
</dbReference>
<dbReference type="PROSITE" id="PS00211">
    <property type="entry name" value="ABC_TRANSPORTER_1"/>
    <property type="match status" value="1"/>
</dbReference>
<dbReference type="PROSITE" id="PS50893">
    <property type="entry name" value="ABC_TRANSPORTER_2"/>
    <property type="match status" value="1"/>
</dbReference>
<feature type="chain" id="PRO_0000449389" description="Xylose/arabinose import ATP-binding protein XacJ">
    <location>
        <begin position="1"/>
        <end position="383"/>
    </location>
</feature>
<feature type="domain" description="ABC transporter" evidence="1">
    <location>
        <begin position="4"/>
        <end position="235"/>
    </location>
</feature>
<feature type="binding site" evidence="1">
    <location>
        <begin position="36"/>
        <end position="43"/>
    </location>
    <ligand>
        <name>ATP</name>
        <dbReference type="ChEBI" id="CHEBI:30616"/>
    </ligand>
</feature>
<gene>
    <name evidence="3" type="primary">xacJ</name>
    <name evidence="6" type="synonym">tsgE7</name>
    <name evidence="6" type="ordered locus">HVO_B0037</name>
</gene>
<accession>D4GP38</accession>
<accession>L9VHW3</accession>
<geneLocation type="plasmid">
    <name>pHV3</name>
</geneLocation>
<name>XACJ_HALVD</name>
<evidence type="ECO:0000255" key="1">
    <source>
        <dbReference type="PROSITE-ProRule" id="PRU00434"/>
    </source>
</evidence>
<evidence type="ECO:0000269" key="2">
    <source>
    </source>
</evidence>
<evidence type="ECO:0000303" key="3">
    <source>
    </source>
</evidence>
<evidence type="ECO:0000305" key="4"/>
<evidence type="ECO:0000305" key="5">
    <source>
    </source>
</evidence>
<evidence type="ECO:0000312" key="6">
    <source>
        <dbReference type="EMBL" id="ADE01308.1"/>
    </source>
</evidence>
<protein>
    <recommendedName>
        <fullName evidence="4">Xylose/arabinose import ATP-binding protein XacJ</fullName>
        <ecNumber evidence="2">7.5.2.13</ecNumber>
    </recommendedName>
</protein>
<sequence>MGQIQLTDLTKRFGDTVAVDDLSLDIDDEEFLVLVGPSGCGKSTTLRMLAGLETPTSGDIYIGGDHMNYRVPQNRDIAMVFQDYALYPHMTVRQNIRFGLEEEEGYTSAERDERVVEVAETLGIADLLDRKPDELSGGQQQRVALGRAIVRDPEVFLMDEPLSNLDAKLRAEMRTELQNLQDQLAVTTVYVTHNQTEAMTMADRIAVMDDGELQQVASPFECYHEPNNLFVAEFIGEPMINLVRGTRSESTFVGEHFSYPLDEDVMESVDDRDDFVLGVRPEDIEVADAAPDDAALDDHDLQMDVTVVEPHGDQNVLHLSHPDQPSADDALQAVTEGMHLVTRGDRVTVTIPPDKIHLFDAETGTAVHNRRHDQEADFTQLEQ</sequence>
<proteinExistence type="evidence at protein level"/>
<keyword id="KW-0067">ATP-binding</keyword>
<keyword id="KW-1003">Cell membrane</keyword>
<keyword id="KW-0472">Membrane</keyword>
<keyword id="KW-0547">Nucleotide-binding</keyword>
<keyword id="KW-0614">Plasmid</keyword>
<keyword id="KW-1185">Reference proteome</keyword>
<keyword id="KW-0762">Sugar transport</keyword>
<keyword id="KW-1278">Translocase</keyword>
<keyword id="KW-0813">Transport</keyword>
<reference key="1">
    <citation type="journal article" date="2010" name="PLoS ONE">
        <title>The complete genome sequence of Haloferax volcanii DS2, a model archaeon.</title>
        <authorList>
            <person name="Hartman A.L."/>
            <person name="Norais C."/>
            <person name="Badger J.H."/>
            <person name="Delmas S."/>
            <person name="Haldenby S."/>
            <person name="Madupu R."/>
            <person name="Robinson J."/>
            <person name="Khouri H."/>
            <person name="Ren Q."/>
            <person name="Lowe T.M."/>
            <person name="Maupin-Furlow J."/>
            <person name="Pohlschroder M."/>
            <person name="Daniels C."/>
            <person name="Pfeiffer F."/>
            <person name="Allers T."/>
            <person name="Eisen J.A."/>
        </authorList>
    </citation>
    <scope>NUCLEOTIDE SEQUENCE [LARGE SCALE GENOMIC DNA]</scope>
    <source>
        <strain>ATCC 29605 / DSM 3757 / JCM 8879 / NBRC 14742 / NCIMB 2012 / VKM B-1768 / DS2</strain>
    </source>
</reference>
<reference key="2">
    <citation type="journal article" date="2019" name="FEMS Microbiol. Lett.">
        <title>Uptake of D-xylose and L-arabinose in Haloferax volcanii involves an ABC transporter of the CUT1 subfamily.</title>
        <authorList>
            <person name="Johnsen U."/>
            <person name="Ortjohann M."/>
            <person name="Sutter J.M."/>
            <person name="Geweke S."/>
            <person name="Schoenheit P."/>
        </authorList>
    </citation>
    <scope>FUNCTION</scope>
    <scope>CATALYTIC ACTIVITY</scope>
    <scope>SUBUNIT</scope>
    <scope>INDUCTION</scope>
    <source>
        <strain>DS2 / DS70 / H26</strain>
    </source>
</reference>